<gene>
    <name type="primary">TREM1</name>
</gene>
<dbReference type="EMBL" id="AY382476">
    <property type="protein sequence ID" value="AAQ83838.1"/>
    <property type="molecule type" value="mRNA"/>
</dbReference>
<dbReference type="RefSeq" id="NP_998921.1">
    <property type="nucleotide sequence ID" value="NM_213756.2"/>
</dbReference>
<dbReference type="SMR" id="Q6TYI6"/>
<dbReference type="FunCoup" id="Q6TYI6">
    <property type="interactions" value="112"/>
</dbReference>
<dbReference type="STRING" id="9823.ENSSSCP00000072323"/>
<dbReference type="GlyCosmos" id="Q6TYI6">
    <property type="glycosylation" value="2 sites, No reported glycans"/>
</dbReference>
<dbReference type="GlyGen" id="Q6TYI6">
    <property type="glycosylation" value="3 sites"/>
</dbReference>
<dbReference type="PaxDb" id="9823-ENSSSCP00000030720"/>
<dbReference type="Ensembl" id="ENSSSCT00000039577.3">
    <property type="protein sequence ID" value="ENSSSCP00000032872.3"/>
    <property type="gene ID" value="ENSSSCG00000033251.3"/>
</dbReference>
<dbReference type="Ensembl" id="ENSSSCT00025077021.1">
    <property type="protein sequence ID" value="ENSSSCP00025033376.1"/>
    <property type="gene ID" value="ENSSSCG00025056327.1"/>
</dbReference>
<dbReference type="Ensembl" id="ENSSSCT00030090753.1">
    <property type="protein sequence ID" value="ENSSSCP00030041790.1"/>
    <property type="gene ID" value="ENSSSCG00030064941.1"/>
</dbReference>
<dbReference type="Ensembl" id="ENSSSCT00045020223.1">
    <property type="protein sequence ID" value="ENSSSCP00045013886.1"/>
    <property type="gene ID" value="ENSSSCG00045011920.1"/>
</dbReference>
<dbReference type="Ensembl" id="ENSSSCT00050006643.1">
    <property type="protein sequence ID" value="ENSSSCP00050002880.1"/>
    <property type="gene ID" value="ENSSSCG00050004829.1"/>
</dbReference>
<dbReference type="Ensembl" id="ENSSSCT00060071570.1">
    <property type="protein sequence ID" value="ENSSSCP00060030868.1"/>
    <property type="gene ID" value="ENSSSCG00060052590.1"/>
</dbReference>
<dbReference type="Ensembl" id="ENSSSCT00065096170.1">
    <property type="protein sequence ID" value="ENSSSCP00065042079.1"/>
    <property type="gene ID" value="ENSSSCG00065070055.1"/>
</dbReference>
<dbReference type="GeneID" id="396601"/>
<dbReference type="KEGG" id="ssc:396601"/>
<dbReference type="CTD" id="54210"/>
<dbReference type="VGNC" id="VGNC:94383">
    <property type="gene designation" value="TREM1"/>
</dbReference>
<dbReference type="eggNOG" id="ENOG502TE0T">
    <property type="taxonomic scope" value="Eukaryota"/>
</dbReference>
<dbReference type="GeneTree" id="ENSGT00470000042299"/>
<dbReference type="HOGENOM" id="CLU_1170307_0_0_1"/>
<dbReference type="InParanoid" id="Q6TYI6"/>
<dbReference type="OMA" id="MTDIIRV"/>
<dbReference type="OrthoDB" id="8959642at2759"/>
<dbReference type="Reactome" id="R-SSC-198933">
    <property type="pathway name" value="Immunoregulatory interactions between a Lymphoid and a non-Lymphoid cell"/>
</dbReference>
<dbReference type="Reactome" id="R-SSC-202733">
    <property type="pathway name" value="Cell surface interactions at the vascular wall"/>
</dbReference>
<dbReference type="Reactome" id="R-SSC-2172127">
    <property type="pathway name" value="DAP12 interactions"/>
</dbReference>
<dbReference type="ChiTaRS" id="TREM1">
    <property type="organism name" value="pig"/>
</dbReference>
<dbReference type="Proteomes" id="UP000008227">
    <property type="component" value="Chromosome 7"/>
</dbReference>
<dbReference type="Proteomes" id="UP000314985">
    <property type="component" value="Unplaced"/>
</dbReference>
<dbReference type="Proteomes" id="UP000694570">
    <property type="component" value="Unplaced"/>
</dbReference>
<dbReference type="Proteomes" id="UP000694571">
    <property type="component" value="Unplaced"/>
</dbReference>
<dbReference type="Proteomes" id="UP000694720">
    <property type="component" value="Unplaced"/>
</dbReference>
<dbReference type="Proteomes" id="UP000694722">
    <property type="component" value="Unplaced"/>
</dbReference>
<dbReference type="Proteomes" id="UP000694723">
    <property type="component" value="Unplaced"/>
</dbReference>
<dbReference type="Proteomes" id="UP000694724">
    <property type="component" value="Unplaced"/>
</dbReference>
<dbReference type="Proteomes" id="UP000694725">
    <property type="component" value="Unplaced"/>
</dbReference>
<dbReference type="Proteomes" id="UP000694726">
    <property type="component" value="Unplaced"/>
</dbReference>
<dbReference type="Proteomes" id="UP000694727">
    <property type="component" value="Unplaced"/>
</dbReference>
<dbReference type="Proteomes" id="UP000694728">
    <property type="component" value="Unplaced"/>
</dbReference>
<dbReference type="GO" id="GO:0009986">
    <property type="term" value="C:cell surface"/>
    <property type="evidence" value="ECO:0007669"/>
    <property type="project" value="Ensembl"/>
</dbReference>
<dbReference type="GO" id="GO:0005886">
    <property type="term" value="C:plasma membrane"/>
    <property type="evidence" value="ECO:0007669"/>
    <property type="project" value="UniProtKB-SubCell"/>
</dbReference>
<dbReference type="GO" id="GO:0097110">
    <property type="term" value="F:scaffold protein binding"/>
    <property type="evidence" value="ECO:0007669"/>
    <property type="project" value="Ensembl"/>
</dbReference>
<dbReference type="GO" id="GO:0004888">
    <property type="term" value="F:transmembrane signaling receptor activity"/>
    <property type="evidence" value="ECO:0007669"/>
    <property type="project" value="Ensembl"/>
</dbReference>
<dbReference type="GO" id="GO:0002250">
    <property type="term" value="P:adaptive immune response"/>
    <property type="evidence" value="ECO:0007669"/>
    <property type="project" value="UniProtKB-KW"/>
</dbReference>
<dbReference type="GO" id="GO:0045087">
    <property type="term" value="P:innate immune response"/>
    <property type="evidence" value="ECO:0007669"/>
    <property type="project" value="UniProtKB-KW"/>
</dbReference>
<dbReference type="Gene3D" id="2.60.40.10">
    <property type="entry name" value="Immunoglobulins"/>
    <property type="match status" value="1"/>
</dbReference>
<dbReference type="InterPro" id="IPR007110">
    <property type="entry name" value="Ig-like_dom"/>
</dbReference>
<dbReference type="InterPro" id="IPR036179">
    <property type="entry name" value="Ig-like_dom_sf"/>
</dbReference>
<dbReference type="InterPro" id="IPR013783">
    <property type="entry name" value="Ig-like_fold"/>
</dbReference>
<dbReference type="InterPro" id="IPR003599">
    <property type="entry name" value="Ig_sub"/>
</dbReference>
<dbReference type="InterPro" id="IPR013106">
    <property type="entry name" value="Ig_V-set"/>
</dbReference>
<dbReference type="PANTHER" id="PTHR19357">
    <property type="entry name" value="TRIGGERING RECEPTOR EXPRESSED ON MYELOID CELLS 1"/>
    <property type="match status" value="1"/>
</dbReference>
<dbReference type="PANTHER" id="PTHR19357:SF0">
    <property type="entry name" value="TRIGGERING RECEPTOR EXPRESSED ON MYELOID CELLS 1"/>
    <property type="match status" value="1"/>
</dbReference>
<dbReference type="Pfam" id="PF07686">
    <property type="entry name" value="V-set"/>
    <property type="match status" value="1"/>
</dbReference>
<dbReference type="SMART" id="SM00409">
    <property type="entry name" value="IG"/>
    <property type="match status" value="1"/>
</dbReference>
<dbReference type="SUPFAM" id="SSF48726">
    <property type="entry name" value="Immunoglobulin"/>
    <property type="match status" value="1"/>
</dbReference>
<dbReference type="PROSITE" id="PS50835">
    <property type="entry name" value="IG_LIKE"/>
    <property type="match status" value="1"/>
</dbReference>
<reference key="1">
    <citation type="journal article" date="2004" name="Vet. Immunol. Immunopathol.">
        <title>Characterization of bovine cDNA encoding triggering receptor expressed on myeloid cells 1 (TREM-1).</title>
        <authorList>
            <person name="Ramanathan B."/>
            <person name="Minton J.E."/>
            <person name="Ross C.R."/>
            <person name="Blecha F."/>
        </authorList>
    </citation>
    <scope>NUCLEOTIDE SEQUENCE [MRNA]</scope>
    <source>
        <tissue>Bone marrow</tissue>
    </source>
</reference>
<organism>
    <name type="scientific">Sus scrofa</name>
    <name type="common">Pig</name>
    <dbReference type="NCBI Taxonomy" id="9823"/>
    <lineage>
        <taxon>Eukaryota</taxon>
        <taxon>Metazoa</taxon>
        <taxon>Chordata</taxon>
        <taxon>Craniata</taxon>
        <taxon>Vertebrata</taxon>
        <taxon>Euteleostomi</taxon>
        <taxon>Mammalia</taxon>
        <taxon>Eutheria</taxon>
        <taxon>Laurasiatheria</taxon>
        <taxon>Artiodactyla</taxon>
        <taxon>Suina</taxon>
        <taxon>Suidae</taxon>
        <taxon>Sus</taxon>
    </lineage>
</organism>
<accession>Q6TYI6</accession>
<comment type="function">
    <text evidence="1">Cell surface receptor that plays important roles in innate and adaptive immunity by amplifying inflammatory responses. Upon activation by various ligands such as PGLYRP1, HMGB1 or HSP70, multimerizes and forms a complex with transmembrane adapter TYROBP/DAP12. In turn, initiates a SYK-mediated cascade of tyrosine phosphorylation, activating multiple downstream mediators such as BTK, MAPK1, MAPK3 or phospholipase C-gamma. This cascade promotes the neutrophil- and macrophage-mediated release of pro-inflammatory cytokines and/or chemokines, as well as their migration and thereby amplifies inflammatory responses that are triggered by bacterial and fungal infections. By also promoting the amplification of inflammatory signals that are initially triggered by Toll-like receptor (TLR) and NOD-like receptor engagement, plays a major role in the pathophysiology of acute and chronic inflammatory diseases of different etiologies including septic shock and atherosclerosis.</text>
</comment>
<comment type="subunit">
    <text evidence="1">Monomer. Homomultimer; when activated. Interacts with TYROBP/DAP12. Interacts with TLR4.</text>
</comment>
<comment type="subcellular location">
    <subcellularLocation>
        <location evidence="1">Cell membrane</location>
        <topology evidence="1">Single-pass type I membrane protein</topology>
    </subcellularLocation>
    <text evidence="1">Recruited to lipid rafts when activated.</text>
</comment>
<protein>
    <recommendedName>
        <fullName>Triggering receptor expressed on myeloid cells 1</fullName>
        <shortName>TREM-1</shortName>
    </recommendedName>
    <cdAntigenName>CD354</cdAntigenName>
</protein>
<evidence type="ECO:0000250" key="1">
    <source>
        <dbReference type="UniProtKB" id="Q9NP99"/>
    </source>
</evidence>
<evidence type="ECO:0000255" key="2"/>
<evidence type="ECO:0000255" key="3">
    <source>
        <dbReference type="PROSITE-ProRule" id="PRU00114"/>
    </source>
</evidence>
<evidence type="ECO:0000256" key="4">
    <source>
        <dbReference type="SAM" id="MobiDB-lite"/>
    </source>
</evidence>
<keyword id="KW-1064">Adaptive immunity</keyword>
<keyword id="KW-1003">Cell membrane</keyword>
<keyword id="KW-1015">Disulfide bond</keyword>
<keyword id="KW-0325">Glycoprotein</keyword>
<keyword id="KW-0391">Immunity</keyword>
<keyword id="KW-0393">Immunoglobulin domain</keyword>
<keyword id="KW-0399">Innate immunity</keyword>
<keyword id="KW-0472">Membrane</keyword>
<keyword id="KW-0675">Receptor</keyword>
<keyword id="KW-1185">Reference proteome</keyword>
<keyword id="KW-0732">Signal</keyword>
<keyword id="KW-0812">Transmembrane</keyword>
<keyword id="KW-1133">Transmembrane helix</keyword>
<sequence>MRSARLGRLLWMLFITEIQAATELPEEKYILAEGETLNVNCPVTVGVYSNSRKAWQKLNRNGKFQTLAITERVSGQVSKVQVGKIFLTDEPSEGMLHVQMTNVQAEDSGLYRCVIYQPPKDPIILFYPVRLVVTNYSSGTPASAETPTQSCSPTTTLPPTTTTNRHRPRPRTVRTVTQFLTDFTTSLSSPGLKVTLTNVTDITRDTEISLILPAVCGLLSKSLVFIVLFVVTRMSFTP</sequence>
<name>TREM1_PIG</name>
<feature type="signal peptide" evidence="2">
    <location>
        <begin position="1"/>
        <end position="20"/>
    </location>
</feature>
<feature type="chain" id="PRO_0000042798" description="Triggering receptor expressed on myeloid cells 1">
    <location>
        <begin position="21"/>
        <end position="238"/>
    </location>
</feature>
<feature type="topological domain" description="Extracellular" evidence="2">
    <location>
        <begin position="21"/>
        <end position="210"/>
    </location>
</feature>
<feature type="transmembrane region" description="Helical" evidence="2">
    <location>
        <begin position="211"/>
        <end position="231"/>
    </location>
</feature>
<feature type="topological domain" description="Cytoplasmic" evidence="2">
    <location>
        <begin position="232"/>
        <end position="238"/>
    </location>
</feature>
<feature type="domain" description="Ig-like V-type">
    <location>
        <begin position="21"/>
        <end position="129"/>
    </location>
</feature>
<feature type="region of interest" description="Disordered" evidence="4">
    <location>
        <begin position="141"/>
        <end position="169"/>
    </location>
</feature>
<feature type="compositionally biased region" description="Low complexity" evidence="4">
    <location>
        <begin position="146"/>
        <end position="163"/>
    </location>
</feature>
<feature type="glycosylation site" description="N-linked (GlcNAc...) asparagine" evidence="2">
    <location>
        <position position="135"/>
    </location>
</feature>
<feature type="glycosylation site" description="N-linked (GlcNAc...) asparagine" evidence="2">
    <location>
        <position position="198"/>
    </location>
</feature>
<feature type="disulfide bond" evidence="3">
    <location>
        <begin position="41"/>
        <end position="113"/>
    </location>
</feature>
<proteinExistence type="evidence at transcript level"/>